<protein>
    <recommendedName>
        <fullName>O-phospho-L-seryl-tRNA:Cys-tRNA synthase</fullName>
        <ecNumber>2.5.1.73</ecNumber>
    </recommendedName>
    <alternativeName>
        <fullName>Sep-tRNA:Cys-tRNA synthase</fullName>
        <shortName>SepCysS</shortName>
    </alternativeName>
</protein>
<evidence type="ECO:0000255" key="1">
    <source>
        <dbReference type="HAMAP-Rule" id="MF_01675"/>
    </source>
</evidence>
<evidence type="ECO:0000269" key="2">
    <source>
    </source>
</evidence>
<evidence type="ECO:0000269" key="3">
    <source>
    </source>
</evidence>
<evidence type="ECO:0000303" key="4">
    <source>
    </source>
</evidence>
<evidence type="ECO:0000305" key="5"/>
<evidence type="ECO:0000305" key="6">
    <source>
    </source>
</evidence>
<evidence type="ECO:0007829" key="7">
    <source>
        <dbReference type="PDB" id="3WKR"/>
    </source>
</evidence>
<evidence type="ECO:0007829" key="8">
    <source>
        <dbReference type="PDB" id="3WKS"/>
    </source>
</evidence>
<evidence type="ECO:0007829" key="9">
    <source>
        <dbReference type="PDB" id="5X6B"/>
    </source>
</evidence>
<keyword id="KW-0002">3D-structure</keyword>
<keyword id="KW-0648">Protein biosynthesis</keyword>
<keyword id="KW-0663">Pyridoxal phosphate</keyword>
<keyword id="KW-1185">Reference proteome</keyword>
<keyword id="KW-0808">Transferase</keyword>
<feature type="chain" id="PRO_0000107475" description="O-phospho-L-seryl-tRNA:Cys-tRNA synthase">
    <location>
        <begin position="1"/>
        <end position="377"/>
    </location>
</feature>
<feature type="binding site" evidence="1">
    <location>
        <begin position="82"/>
        <end position="83"/>
    </location>
    <ligand>
        <name>pyridoxal 5'-phosphate</name>
        <dbReference type="ChEBI" id="CHEBI:597326"/>
    </ligand>
</feature>
<feature type="binding site" evidence="1">
    <location>
        <position position="189"/>
    </location>
    <ligand>
        <name>pyridoxal 5'-phosphate</name>
        <dbReference type="ChEBI" id="CHEBI:597326"/>
    </ligand>
</feature>
<feature type="binding site" evidence="1">
    <location>
        <begin position="212"/>
        <end position="214"/>
    </location>
    <ligand>
        <name>pyridoxal 5'-phosphate</name>
        <dbReference type="ChEBI" id="CHEBI:597326"/>
    </ligand>
</feature>
<feature type="modified residue" description="N6-(pyridoxal phosphate)lysine" evidence="1">
    <location>
        <position position="215"/>
    </location>
</feature>
<feature type="helix" evidence="9">
    <location>
        <begin position="1"/>
        <end position="4"/>
    </location>
</feature>
<feature type="turn" evidence="8">
    <location>
        <begin position="5"/>
        <end position="7"/>
    </location>
</feature>
<feature type="strand" evidence="9">
    <location>
        <begin position="12"/>
        <end position="17"/>
    </location>
</feature>
<feature type="helix" evidence="9">
    <location>
        <begin position="20"/>
        <end position="23"/>
    </location>
</feature>
<feature type="helix" evidence="9">
    <location>
        <begin position="29"/>
        <end position="37"/>
    </location>
</feature>
<feature type="helix" evidence="9">
    <location>
        <begin position="58"/>
        <end position="70"/>
    </location>
</feature>
<feature type="strand" evidence="9">
    <location>
        <begin position="74"/>
        <end position="81"/>
    </location>
</feature>
<feature type="helix" evidence="9">
    <location>
        <begin position="82"/>
        <end position="93"/>
    </location>
</feature>
<feature type="strand" evidence="9">
    <location>
        <begin position="99"/>
        <end position="103"/>
    </location>
</feature>
<feature type="helix" evidence="9">
    <location>
        <begin position="108"/>
        <end position="116"/>
    </location>
</feature>
<feature type="strand" evidence="9">
    <location>
        <begin position="120"/>
        <end position="124"/>
    </location>
</feature>
<feature type="strand" evidence="9">
    <location>
        <begin position="126"/>
        <end position="128"/>
    </location>
</feature>
<feature type="turn" evidence="9">
    <location>
        <begin position="130"/>
        <end position="132"/>
    </location>
</feature>
<feature type="helix" evidence="9">
    <location>
        <begin position="139"/>
        <end position="149"/>
    </location>
</feature>
<feature type="strand" evidence="9">
    <location>
        <begin position="154"/>
        <end position="162"/>
    </location>
</feature>
<feature type="turn" evidence="9">
    <location>
        <begin position="164"/>
        <end position="166"/>
    </location>
</feature>
<feature type="helix" evidence="9">
    <location>
        <begin position="172"/>
        <end position="180"/>
    </location>
</feature>
<feature type="turn" evidence="9">
    <location>
        <begin position="181"/>
        <end position="183"/>
    </location>
</feature>
<feature type="strand" evidence="9">
    <location>
        <begin position="186"/>
        <end position="189"/>
    </location>
</feature>
<feature type="turn" evidence="9">
    <location>
        <begin position="191"/>
        <end position="193"/>
    </location>
</feature>
<feature type="turn" evidence="9">
    <location>
        <begin position="201"/>
        <end position="205"/>
    </location>
</feature>
<feature type="strand" evidence="9">
    <location>
        <begin position="207"/>
        <end position="212"/>
    </location>
</feature>
<feature type="strand" evidence="9">
    <location>
        <begin position="220"/>
        <end position="222"/>
    </location>
</feature>
<feature type="strand" evidence="9">
    <location>
        <begin position="224"/>
        <end position="228"/>
    </location>
</feature>
<feature type="helix" evidence="9">
    <location>
        <begin position="230"/>
        <end position="236"/>
    </location>
</feature>
<feature type="strand" evidence="7">
    <location>
        <begin position="241"/>
        <end position="247"/>
    </location>
</feature>
<feature type="helix" evidence="9">
    <location>
        <begin position="248"/>
        <end position="250"/>
    </location>
</feature>
<feature type="helix" evidence="9">
    <location>
        <begin position="258"/>
        <end position="273"/>
    </location>
</feature>
<feature type="turn" evidence="9">
    <location>
        <begin position="274"/>
        <end position="276"/>
    </location>
</feature>
<feature type="helix" evidence="9">
    <location>
        <begin position="277"/>
        <end position="292"/>
    </location>
</feature>
<feature type="turn" evidence="9">
    <location>
        <begin position="293"/>
        <end position="295"/>
    </location>
</feature>
<feature type="strand" evidence="9">
    <location>
        <begin position="297"/>
        <end position="303"/>
    </location>
</feature>
<feature type="strand" evidence="9">
    <location>
        <begin position="305"/>
        <end position="307"/>
    </location>
</feature>
<feature type="strand" evidence="9">
    <location>
        <begin position="309"/>
        <end position="312"/>
    </location>
</feature>
<feature type="helix" evidence="9">
    <location>
        <begin position="314"/>
        <end position="320"/>
    </location>
</feature>
<feature type="helix" evidence="9">
    <location>
        <begin position="326"/>
        <end position="328"/>
    </location>
</feature>
<feature type="helix" evidence="9">
    <location>
        <begin position="329"/>
        <end position="336"/>
    </location>
</feature>
<feature type="strand" evidence="9">
    <location>
        <begin position="348"/>
        <end position="352"/>
    </location>
</feature>
<feature type="helix" evidence="9">
    <location>
        <begin position="359"/>
        <end position="375"/>
    </location>
</feature>
<organism>
    <name type="scientific">Methanocaldococcus jannaschii (strain ATCC 43067 / DSM 2661 / JAL-1 / JCM 10045 / NBRC 100440)</name>
    <name type="common">Methanococcus jannaschii</name>
    <dbReference type="NCBI Taxonomy" id="243232"/>
    <lineage>
        <taxon>Archaea</taxon>
        <taxon>Methanobacteriati</taxon>
        <taxon>Methanobacteriota</taxon>
        <taxon>Methanomada group</taxon>
        <taxon>Methanococci</taxon>
        <taxon>Methanococcales</taxon>
        <taxon>Methanocaldococcaceae</taxon>
        <taxon>Methanocaldococcus</taxon>
    </lineage>
</organism>
<accession>Q59072</accession>
<sequence length="377" mass="42764">MDKYKNLTRSLTREFINLNPIQRGGILPKEAKKAVYEYWDGYSVCDYCHGRLDEVTCPPIKDFLEDIAKFLNMDCARPTHGAREGKFIVMHAICKEGDYVVLDKNAHYTSYVAAERAKLNVAEVGYEEEYPTYKINLEGYKEVIDNLEDKGKNVGLILLTHVDGEYGNLNDAKKVGKIAKEKGIPFLLNCAYTVGRMPVNGKEVKADFIVASGHKSMAASAPCGILAFSEEFSDKITKTSEKFPVKEIEMLGCTSRGLPIVTLMASFPHVVERVKKWDEELKKTRYVVDELEKIGFKQLGIKPKEHDLIKFETPVLDEIAKKDKRRGFFFYDELKKRGIGGIRAGVTKEIKMSVYGLEWEQVEYVVNAIKEIVESCK</sequence>
<dbReference type="EC" id="2.5.1.73"/>
<dbReference type="EMBL" id="L77117">
    <property type="protein sequence ID" value="AAB99700.1"/>
    <property type="status" value="ALT_INIT"/>
    <property type="molecule type" value="Genomic_DNA"/>
</dbReference>
<dbReference type="PIR" id="D64509">
    <property type="entry name" value="D64509"/>
</dbReference>
<dbReference type="PDB" id="3WKR">
    <property type="method" value="X-ray"/>
    <property type="resolution" value="2.80 A"/>
    <property type="chains" value="A/B/E/F=2-377"/>
</dbReference>
<dbReference type="PDB" id="3WKS">
    <property type="method" value="X-ray"/>
    <property type="resolution" value="3.03 A"/>
    <property type="chains" value="A/B=2-377"/>
</dbReference>
<dbReference type="PDB" id="5X6B">
    <property type="method" value="X-ray"/>
    <property type="resolution" value="2.60 A"/>
    <property type="chains" value="I/J=1-377"/>
</dbReference>
<dbReference type="PDBsum" id="3WKR"/>
<dbReference type="PDBsum" id="3WKS"/>
<dbReference type="PDBsum" id="5X6B"/>
<dbReference type="SMR" id="Q59072"/>
<dbReference type="DIP" id="DIP-46383N"/>
<dbReference type="FunCoup" id="Q59072">
    <property type="interactions" value="28"/>
</dbReference>
<dbReference type="IntAct" id="Q59072">
    <property type="interactions" value="1"/>
</dbReference>
<dbReference type="STRING" id="243232.MJ_1678"/>
<dbReference type="PaxDb" id="243232-MJ_1678"/>
<dbReference type="EnsemblBacteria" id="AAB99700">
    <property type="protein sequence ID" value="AAB99700"/>
    <property type="gene ID" value="MJ_1678"/>
</dbReference>
<dbReference type="KEGG" id="mja:MJ_1678"/>
<dbReference type="eggNOG" id="arCOG00091">
    <property type="taxonomic scope" value="Archaea"/>
</dbReference>
<dbReference type="HOGENOM" id="CLU_060476_0_0_2"/>
<dbReference type="InParanoid" id="Q59072"/>
<dbReference type="PhylomeDB" id="Q59072"/>
<dbReference type="BioCyc" id="MetaCyc:MONOMER-14997"/>
<dbReference type="BRENDA" id="2.5.1.73">
    <property type="organism ID" value="3260"/>
</dbReference>
<dbReference type="SABIO-RK" id="Q59072"/>
<dbReference type="EvolutionaryTrace" id="Q59072"/>
<dbReference type="Proteomes" id="UP000000805">
    <property type="component" value="Chromosome"/>
</dbReference>
<dbReference type="GO" id="GO:0043766">
    <property type="term" value="F:Sep-tRNA:Cys-tRNA synthase activity"/>
    <property type="evidence" value="ECO:0007669"/>
    <property type="project" value="UniProtKB-UniRule"/>
</dbReference>
<dbReference type="GO" id="GO:0006412">
    <property type="term" value="P:translation"/>
    <property type="evidence" value="ECO:0007669"/>
    <property type="project" value="UniProtKB-KW"/>
</dbReference>
<dbReference type="CDD" id="cd06452">
    <property type="entry name" value="SepCysS"/>
    <property type="match status" value="1"/>
</dbReference>
<dbReference type="Gene3D" id="3.90.1150.10">
    <property type="entry name" value="Aspartate Aminotransferase, domain 1"/>
    <property type="match status" value="1"/>
</dbReference>
<dbReference type="Gene3D" id="3.40.640.10">
    <property type="entry name" value="Type I PLP-dependent aspartate aminotransferase-like (Major domain)"/>
    <property type="match status" value="1"/>
</dbReference>
<dbReference type="HAMAP" id="MF_01675">
    <property type="entry name" value="Sep_Cys_tRNA_synth"/>
    <property type="match status" value="1"/>
</dbReference>
<dbReference type="InterPro" id="IPR015424">
    <property type="entry name" value="PyrdxlP-dep_Trfase"/>
</dbReference>
<dbReference type="InterPro" id="IPR015421">
    <property type="entry name" value="PyrdxlP-dep_Trfase_major"/>
</dbReference>
<dbReference type="InterPro" id="IPR015422">
    <property type="entry name" value="PyrdxlP-dep_Trfase_small"/>
</dbReference>
<dbReference type="InterPro" id="IPR013375">
    <property type="entry name" value="Sep_Cys-tRNA_synth_arc"/>
</dbReference>
<dbReference type="InterPro" id="IPR008829">
    <property type="entry name" value="SepSecS/SepCysS"/>
</dbReference>
<dbReference type="NCBIfam" id="NF006810">
    <property type="entry name" value="PRK09331.1"/>
    <property type="match status" value="1"/>
</dbReference>
<dbReference type="NCBIfam" id="TIGR02539">
    <property type="entry name" value="SepCysS"/>
    <property type="match status" value="1"/>
</dbReference>
<dbReference type="PANTHER" id="PTHR43586">
    <property type="entry name" value="CYSTEINE DESULFURASE"/>
    <property type="match status" value="1"/>
</dbReference>
<dbReference type="PANTHER" id="PTHR43586:SF3">
    <property type="entry name" value="O-PHOSPHO-L-SERYL-TRNA:CYS-TRNA SYNTHASE"/>
    <property type="match status" value="1"/>
</dbReference>
<dbReference type="Pfam" id="PF05889">
    <property type="entry name" value="SepSecS"/>
    <property type="match status" value="1"/>
</dbReference>
<dbReference type="SUPFAM" id="SSF53383">
    <property type="entry name" value="PLP-dependent transferases"/>
    <property type="match status" value="1"/>
</dbReference>
<proteinExistence type="evidence at protein level"/>
<reference key="1">
    <citation type="journal article" date="1996" name="Science">
        <title>Complete genome sequence of the methanogenic archaeon, Methanococcus jannaschii.</title>
        <authorList>
            <person name="Bult C.J."/>
            <person name="White O."/>
            <person name="Olsen G.J."/>
            <person name="Zhou L."/>
            <person name="Fleischmann R.D."/>
            <person name="Sutton G.G."/>
            <person name="Blake J.A."/>
            <person name="FitzGerald L.M."/>
            <person name="Clayton R.A."/>
            <person name="Gocayne J.D."/>
            <person name="Kerlavage A.R."/>
            <person name="Dougherty B.A."/>
            <person name="Tomb J.-F."/>
            <person name="Adams M.D."/>
            <person name="Reich C.I."/>
            <person name="Overbeek R."/>
            <person name="Kirkness E.F."/>
            <person name="Weinstock K.G."/>
            <person name="Merrick J.M."/>
            <person name="Glodek A."/>
            <person name="Scott J.L."/>
            <person name="Geoghagen N.S.M."/>
            <person name="Weidman J.F."/>
            <person name="Fuhrmann J.L."/>
            <person name="Nguyen D."/>
            <person name="Utterback T.R."/>
            <person name="Kelley J.M."/>
            <person name="Peterson J.D."/>
            <person name="Sadow P.W."/>
            <person name="Hanna M.C."/>
            <person name="Cotton M.D."/>
            <person name="Roberts K.M."/>
            <person name="Hurst M.A."/>
            <person name="Kaine B.P."/>
            <person name="Borodovsky M."/>
            <person name="Klenk H.-P."/>
            <person name="Fraser C.M."/>
            <person name="Smith H.O."/>
            <person name="Woese C.R."/>
            <person name="Venter J.C."/>
        </authorList>
    </citation>
    <scope>NUCLEOTIDE SEQUENCE [LARGE SCALE GENOMIC DNA]</scope>
    <source>
        <strain>ATCC 43067 / DSM 2661 / JAL-1 / JCM 10045 / NBRC 100440</strain>
    </source>
</reference>
<reference key="2">
    <citation type="journal article" date="2005" name="Science">
        <title>RNA-dependent cysteine biosynthesis in archaea.</title>
        <authorList>
            <person name="Sauerwald A."/>
            <person name="Zhu W."/>
            <person name="Major T.A."/>
            <person name="Roy H."/>
            <person name="Palioura S."/>
            <person name="Jahn D."/>
            <person name="Whitman W.B."/>
            <person name="Yates J.R. III"/>
            <person name="Ibba M."/>
            <person name="Soell D."/>
        </authorList>
    </citation>
    <scope>FUNCTION</scope>
    <scope>CATALYTIC ACTIVITY</scope>
</reference>
<reference key="3">
    <citation type="journal article" date="2008" name="Nat. Struct. Mol. Biol.">
        <title>Aminoacylation of tRNA with phosphoserine for synthesis of cysteinyl-tRNA(Cys).</title>
        <authorList>
            <person name="Zhang C.-M."/>
            <person name="Liu C."/>
            <person name="Slater S."/>
            <person name="Hou Y.-M."/>
        </authorList>
    </citation>
    <scope>INTERACTION WITH SEPRS</scope>
    <scope>SUBUNIT</scope>
</reference>
<comment type="function">
    <text evidence="2">Converts O-phospho-L-seryl-tRNA(Cys) (Sep-tRNA(Cys)) to L-cysteinyl-tRNA(Cys) (Cys-tRNA(Cys)).</text>
</comment>
<comment type="catalytic activity">
    <reaction evidence="2">
        <text>O-phospho-L-seryl-tRNA(Cys) + hydrogen sulfide + H(+) = L-cysteinyl-tRNA(Cys) + phosphate</text>
        <dbReference type="Rhea" id="RHEA:25686"/>
        <dbReference type="Rhea" id="RHEA-COMP:9679"/>
        <dbReference type="Rhea" id="RHEA-COMP:9719"/>
        <dbReference type="ChEBI" id="CHEBI:15378"/>
        <dbReference type="ChEBI" id="CHEBI:29919"/>
        <dbReference type="ChEBI" id="CHEBI:43474"/>
        <dbReference type="ChEBI" id="CHEBI:78517"/>
        <dbReference type="ChEBI" id="CHEBI:78551"/>
        <dbReference type="EC" id="2.5.1.73"/>
    </reaction>
    <physiologicalReaction direction="left-to-right" evidence="6">
        <dbReference type="Rhea" id="RHEA:25687"/>
    </physiologicalReaction>
</comment>
<comment type="cofactor">
    <cofactor evidence="5">
        <name>pyridoxal 5'-phosphate</name>
        <dbReference type="ChEBI" id="CHEBI:597326"/>
    </cofactor>
</comment>
<comment type="subunit">
    <text evidence="3">Homodimer. Interacts with SepRS.</text>
</comment>
<comment type="interaction">
    <interactant intactId="EBI-15698426">
        <id>Q59072</id>
    </interactant>
    <interactant intactId="EBI-15698391">
        <id>Q59054</id>
        <label>sepS</label>
    </interactant>
    <organismsDiffer>false</organismsDiffer>
    <experiments>4</experiments>
</comment>
<comment type="similarity">
    <text evidence="5">Belongs to the SepCysS family.</text>
</comment>
<comment type="sequence caution" evidence="5">
    <conflict type="erroneous initiation">
        <sequence resource="EMBL-CDS" id="AAB99700"/>
    </conflict>
</comment>
<gene>
    <name evidence="4" type="primary">pscS</name>
    <name type="ordered locus">MJ1678</name>
</gene>
<name>SPSS_METJA</name>